<evidence type="ECO:0000255" key="1">
    <source>
        <dbReference type="HAMAP-Rule" id="MF_00375"/>
    </source>
</evidence>
<reference key="1">
    <citation type="submission" date="2006-12" db="EMBL/GenBank/DDBJ databases">
        <authorList>
            <person name="Fouts D.E."/>
            <person name="Nelson K.E."/>
            <person name="Sebastian Y."/>
        </authorList>
    </citation>
    <scope>NUCLEOTIDE SEQUENCE [LARGE SCALE GENOMIC DNA]</scope>
    <source>
        <strain>81-176</strain>
    </source>
</reference>
<feature type="chain" id="PRO_0000300900" description="Glutamate-1-semialdehyde 2,1-aminomutase">
    <location>
        <begin position="1"/>
        <end position="424"/>
    </location>
</feature>
<feature type="modified residue" description="N6-(pyridoxal phosphate)lysine" evidence="1">
    <location>
        <position position="263"/>
    </location>
</feature>
<sequence length="424" mass="46061">MTNKKAFKEACKFIAGGVNSPVRAFANVQSEPKFISHGKGAYIFDIDGNSYIDYVQSWGPLLFGHCDKDIQKACQKALHKGSSFGAPTLLETELAKLVLSDFPHLEKIRFVSSGTEATMSAIRLARGFTKKDKILKFEGCYHGHSDSLLVSAGSGAATFNSPSSLGVLEDVAKHTLVAKYNDINSVKELFEKNKDIACVIIEPIAGNMGLVPAKQDFLEELAKICKNNQTLLIFDEVMSGYRASYLGSYGINHIQADIITFGKVIGGGLPAAAFASRAEIMDILSPLGGVYQAGTLSGNPLAMAAGIASLTKAKKKTKLYNKLGKLAKKLTQGMKKLADEKGLPLQACHVGSMFGYFFTKDPVSNYQDALKSDLALFSKFHKNMLENGIYLAPSQFETGFICSKMDDKIIDTTLEAVRESFKRI</sequence>
<dbReference type="EC" id="5.4.3.8" evidence="1"/>
<dbReference type="EMBL" id="CP000538">
    <property type="protein sequence ID" value="EAQ72278.1"/>
    <property type="molecule type" value="Genomic_DNA"/>
</dbReference>
<dbReference type="RefSeq" id="WP_002857128.1">
    <property type="nucleotide sequence ID" value="NC_008787.1"/>
</dbReference>
<dbReference type="SMR" id="A1VZJ6"/>
<dbReference type="KEGG" id="cjj:CJJ81176_0869"/>
<dbReference type="eggNOG" id="COG0001">
    <property type="taxonomic scope" value="Bacteria"/>
</dbReference>
<dbReference type="HOGENOM" id="CLU_016922_1_5_7"/>
<dbReference type="UniPathway" id="UPA00251">
    <property type="reaction ID" value="UER00317"/>
</dbReference>
<dbReference type="Proteomes" id="UP000000646">
    <property type="component" value="Chromosome"/>
</dbReference>
<dbReference type="GO" id="GO:0005737">
    <property type="term" value="C:cytoplasm"/>
    <property type="evidence" value="ECO:0007669"/>
    <property type="project" value="UniProtKB-SubCell"/>
</dbReference>
<dbReference type="GO" id="GO:0042286">
    <property type="term" value="F:glutamate-1-semialdehyde 2,1-aminomutase activity"/>
    <property type="evidence" value="ECO:0007669"/>
    <property type="project" value="UniProtKB-UniRule"/>
</dbReference>
<dbReference type="GO" id="GO:0030170">
    <property type="term" value="F:pyridoxal phosphate binding"/>
    <property type="evidence" value="ECO:0007669"/>
    <property type="project" value="InterPro"/>
</dbReference>
<dbReference type="GO" id="GO:0008483">
    <property type="term" value="F:transaminase activity"/>
    <property type="evidence" value="ECO:0007669"/>
    <property type="project" value="InterPro"/>
</dbReference>
<dbReference type="GO" id="GO:0006782">
    <property type="term" value="P:protoporphyrinogen IX biosynthetic process"/>
    <property type="evidence" value="ECO:0007669"/>
    <property type="project" value="UniProtKB-UniRule"/>
</dbReference>
<dbReference type="CDD" id="cd00610">
    <property type="entry name" value="OAT_like"/>
    <property type="match status" value="1"/>
</dbReference>
<dbReference type="FunFam" id="3.40.640.10:FF:000021">
    <property type="entry name" value="Glutamate-1-semialdehyde 2,1-aminomutase"/>
    <property type="match status" value="1"/>
</dbReference>
<dbReference type="Gene3D" id="3.90.1150.10">
    <property type="entry name" value="Aspartate Aminotransferase, domain 1"/>
    <property type="match status" value="1"/>
</dbReference>
<dbReference type="Gene3D" id="3.40.640.10">
    <property type="entry name" value="Type I PLP-dependent aspartate aminotransferase-like (Major domain)"/>
    <property type="match status" value="1"/>
</dbReference>
<dbReference type="HAMAP" id="MF_00375">
    <property type="entry name" value="HemL_aminotrans_3"/>
    <property type="match status" value="1"/>
</dbReference>
<dbReference type="InterPro" id="IPR004639">
    <property type="entry name" value="4pyrrol_synth_GluAld_NH2Trfase"/>
</dbReference>
<dbReference type="InterPro" id="IPR005814">
    <property type="entry name" value="Aminotrans_3"/>
</dbReference>
<dbReference type="InterPro" id="IPR049704">
    <property type="entry name" value="Aminotrans_3_PPA_site"/>
</dbReference>
<dbReference type="InterPro" id="IPR015424">
    <property type="entry name" value="PyrdxlP-dep_Trfase"/>
</dbReference>
<dbReference type="InterPro" id="IPR015421">
    <property type="entry name" value="PyrdxlP-dep_Trfase_major"/>
</dbReference>
<dbReference type="InterPro" id="IPR015422">
    <property type="entry name" value="PyrdxlP-dep_Trfase_small"/>
</dbReference>
<dbReference type="NCBIfam" id="TIGR00713">
    <property type="entry name" value="hemL"/>
    <property type="match status" value="1"/>
</dbReference>
<dbReference type="NCBIfam" id="NF000818">
    <property type="entry name" value="PRK00062.1"/>
    <property type="match status" value="1"/>
</dbReference>
<dbReference type="PANTHER" id="PTHR43713">
    <property type="entry name" value="GLUTAMATE-1-SEMIALDEHYDE 2,1-AMINOMUTASE"/>
    <property type="match status" value="1"/>
</dbReference>
<dbReference type="PANTHER" id="PTHR43713:SF3">
    <property type="entry name" value="GLUTAMATE-1-SEMIALDEHYDE 2,1-AMINOMUTASE 1, CHLOROPLASTIC-RELATED"/>
    <property type="match status" value="1"/>
</dbReference>
<dbReference type="Pfam" id="PF00202">
    <property type="entry name" value="Aminotran_3"/>
    <property type="match status" value="1"/>
</dbReference>
<dbReference type="SUPFAM" id="SSF53383">
    <property type="entry name" value="PLP-dependent transferases"/>
    <property type="match status" value="1"/>
</dbReference>
<dbReference type="PROSITE" id="PS00600">
    <property type="entry name" value="AA_TRANSFER_CLASS_3"/>
    <property type="match status" value="1"/>
</dbReference>
<comment type="catalytic activity">
    <reaction evidence="1">
        <text>(S)-4-amino-5-oxopentanoate = 5-aminolevulinate</text>
        <dbReference type="Rhea" id="RHEA:14265"/>
        <dbReference type="ChEBI" id="CHEBI:57501"/>
        <dbReference type="ChEBI" id="CHEBI:356416"/>
        <dbReference type="EC" id="5.4.3.8"/>
    </reaction>
</comment>
<comment type="cofactor">
    <cofactor evidence="1">
        <name>pyridoxal 5'-phosphate</name>
        <dbReference type="ChEBI" id="CHEBI:597326"/>
    </cofactor>
</comment>
<comment type="pathway">
    <text evidence="1">Porphyrin-containing compound metabolism; protoporphyrin-IX biosynthesis; 5-aminolevulinate from L-glutamyl-tRNA(Glu): step 2/2.</text>
</comment>
<comment type="subunit">
    <text evidence="1">Homodimer.</text>
</comment>
<comment type="subcellular location">
    <subcellularLocation>
        <location evidence="1">Cytoplasm</location>
    </subcellularLocation>
</comment>
<comment type="similarity">
    <text evidence="1">Belongs to the class-III pyridoxal-phosphate-dependent aminotransferase family. HemL subfamily.</text>
</comment>
<protein>
    <recommendedName>
        <fullName evidence="1">Glutamate-1-semialdehyde 2,1-aminomutase</fullName>
        <shortName evidence="1">GSA</shortName>
        <ecNumber evidence="1">5.4.3.8</ecNumber>
    </recommendedName>
    <alternativeName>
        <fullName evidence="1">Glutamate-1-semialdehyde aminotransferase</fullName>
        <shortName evidence="1">GSA-AT</shortName>
    </alternativeName>
</protein>
<keyword id="KW-0963">Cytoplasm</keyword>
<keyword id="KW-0413">Isomerase</keyword>
<keyword id="KW-0627">Porphyrin biosynthesis</keyword>
<keyword id="KW-0663">Pyridoxal phosphate</keyword>
<organism>
    <name type="scientific">Campylobacter jejuni subsp. jejuni serotype O:23/36 (strain 81-176)</name>
    <dbReference type="NCBI Taxonomy" id="354242"/>
    <lineage>
        <taxon>Bacteria</taxon>
        <taxon>Pseudomonadati</taxon>
        <taxon>Campylobacterota</taxon>
        <taxon>Epsilonproteobacteria</taxon>
        <taxon>Campylobacterales</taxon>
        <taxon>Campylobacteraceae</taxon>
        <taxon>Campylobacter</taxon>
    </lineage>
</organism>
<gene>
    <name evidence="1" type="primary">hemL</name>
    <name type="ordered locus">CJJ81176_0869</name>
</gene>
<name>GSA_CAMJJ</name>
<accession>A1VZJ6</accession>
<proteinExistence type="inferred from homology"/>